<protein>
    <recommendedName>
        <fullName>Cytochrome P450 1A2</fullName>
        <ecNumber evidence="2">1.14.14.1</ecNumber>
    </recommendedName>
    <alternativeName>
        <fullName>CYPIA2</fullName>
    </alternativeName>
    <alternativeName>
        <fullName evidence="2">Cholesterol 25-hydroxylase</fullName>
    </alternativeName>
    <alternativeName>
        <fullName>Hydroperoxy icosatetraenoate dehydratase</fullName>
        <ecNumber evidence="2">4.2.1.152</ecNumber>
    </alternativeName>
</protein>
<name>CP1A2_PONAB</name>
<reference key="1">
    <citation type="submission" date="2004-11" db="EMBL/GenBank/DDBJ databases">
        <authorList>
            <consortium name="The German cDNA consortium"/>
        </authorList>
    </citation>
    <scope>NUCLEOTIDE SEQUENCE [LARGE SCALE MRNA]</scope>
    <source>
        <tissue>Liver</tissue>
    </source>
</reference>
<comment type="function">
    <text evidence="2">A cytochrome P450 monooxygenase involved in the metabolism of various endogenous substrates, including fatty acids, steroid hormones and vitamins. Mechanistically, uses molecular oxygen inserting one oxygen atom into a substrate, and reducing the second into a water molecule, with two electrons provided by NADPH via cytochrome P450 reductase (NADPH--hemoprotein reductase). Catalyzes the hydroxylation of carbon-hydrogen bonds. Exhibits high catalytic activity for the formation of hydroxyestrogens from estrone (E1) and 17beta-estradiol (E2), namely 2-hydroxy E1 and E2. Metabolizes cholesterol toward 25-hydroxycholesterol, a physiological regulator of cellular cholesterol homeostasis. May act as a major enzyme for all-trans retinoic acid biosynthesis in the liver. Catalyzes two successive oxidative transformation of all-trans retinol to all-trans retinal and then to the active form all-trans retinoic acid. Primarily catalyzes stereoselective epoxidation of the last double bond of polyunsaturated fatty acids (PUFA), displaying a strong preference for the (R,S) stereoisomer. Catalyzes bisallylic hydroxylation and omega-1 hydroxylation of PUFA. May also participate in eicosanoids metabolism by converting hydroperoxide species into oxo metabolites (lipoxygenase-like reaction, NADPH-independent). Plays a role in the oxidative metabolism of xenobiotics. Catalyzes the N-hydroxylation of heterocyclic amines and the O-deethylation of phenacetin. Metabolizes caffeine via N3-demethylation.</text>
</comment>
<comment type="catalytic activity">
    <reaction evidence="2">
        <text>an organic molecule + reduced [NADPH--hemoprotein reductase] + O2 = an alcohol + oxidized [NADPH--hemoprotein reductase] + H2O + H(+)</text>
        <dbReference type="Rhea" id="RHEA:17149"/>
        <dbReference type="Rhea" id="RHEA-COMP:11964"/>
        <dbReference type="Rhea" id="RHEA-COMP:11965"/>
        <dbReference type="ChEBI" id="CHEBI:15377"/>
        <dbReference type="ChEBI" id="CHEBI:15378"/>
        <dbReference type="ChEBI" id="CHEBI:15379"/>
        <dbReference type="ChEBI" id="CHEBI:30879"/>
        <dbReference type="ChEBI" id="CHEBI:57618"/>
        <dbReference type="ChEBI" id="CHEBI:58210"/>
        <dbReference type="ChEBI" id="CHEBI:142491"/>
        <dbReference type="EC" id="1.14.14.1"/>
    </reaction>
    <physiologicalReaction direction="left-to-right" evidence="2">
        <dbReference type="Rhea" id="RHEA:17150"/>
    </physiologicalReaction>
</comment>
<comment type="catalytic activity">
    <reaction evidence="2">
        <text>17beta-estradiol + reduced [NADPH--hemoprotein reductase] + O2 = 2-hydroxy-17beta-estradiol + oxidized [NADPH--hemoprotein reductase] + H2O + H(+)</text>
        <dbReference type="Rhea" id="RHEA:47212"/>
        <dbReference type="Rhea" id="RHEA-COMP:11964"/>
        <dbReference type="Rhea" id="RHEA-COMP:11965"/>
        <dbReference type="ChEBI" id="CHEBI:15377"/>
        <dbReference type="ChEBI" id="CHEBI:15378"/>
        <dbReference type="ChEBI" id="CHEBI:15379"/>
        <dbReference type="ChEBI" id="CHEBI:16469"/>
        <dbReference type="ChEBI" id="CHEBI:28744"/>
        <dbReference type="ChEBI" id="CHEBI:57618"/>
        <dbReference type="ChEBI" id="CHEBI:58210"/>
    </reaction>
    <physiologicalReaction direction="left-to-right" evidence="2">
        <dbReference type="Rhea" id="RHEA:47213"/>
    </physiologicalReaction>
</comment>
<comment type="catalytic activity">
    <reaction evidence="2">
        <text>17beta-estradiol + reduced [NADPH--hemoprotein reductase] + O2 = 4-hydroxy-17beta-estradiol + oxidized [NADPH--hemoprotein reductase] + H2O + H(+)</text>
        <dbReference type="Rhea" id="RHEA:47280"/>
        <dbReference type="Rhea" id="RHEA-COMP:11964"/>
        <dbReference type="Rhea" id="RHEA-COMP:11965"/>
        <dbReference type="ChEBI" id="CHEBI:15377"/>
        <dbReference type="ChEBI" id="CHEBI:15378"/>
        <dbReference type="ChEBI" id="CHEBI:15379"/>
        <dbReference type="ChEBI" id="CHEBI:16469"/>
        <dbReference type="ChEBI" id="CHEBI:57618"/>
        <dbReference type="ChEBI" id="CHEBI:58210"/>
        <dbReference type="ChEBI" id="CHEBI:62845"/>
    </reaction>
    <physiologicalReaction direction="left-to-right" evidence="2">
        <dbReference type="Rhea" id="RHEA:47281"/>
    </physiologicalReaction>
</comment>
<comment type="catalytic activity">
    <reaction evidence="2">
        <text>estrone + reduced [NADPH--hemoprotein reductase] + O2 = 2-hydroxyestrone + oxidized [NADPH--hemoprotein reductase] + H2O + H(+)</text>
        <dbReference type="Rhea" id="RHEA:47208"/>
        <dbReference type="Rhea" id="RHEA-COMP:11964"/>
        <dbReference type="Rhea" id="RHEA-COMP:11965"/>
        <dbReference type="ChEBI" id="CHEBI:1156"/>
        <dbReference type="ChEBI" id="CHEBI:15377"/>
        <dbReference type="ChEBI" id="CHEBI:15378"/>
        <dbReference type="ChEBI" id="CHEBI:15379"/>
        <dbReference type="ChEBI" id="CHEBI:17263"/>
        <dbReference type="ChEBI" id="CHEBI:57618"/>
        <dbReference type="ChEBI" id="CHEBI:58210"/>
    </reaction>
    <physiologicalReaction direction="left-to-right" evidence="2">
        <dbReference type="Rhea" id="RHEA:47209"/>
    </physiologicalReaction>
</comment>
<comment type="catalytic activity">
    <reaction evidence="2">
        <text>estrone + reduced [NADPH--hemoprotein reductase] + O2 = 4-hydroxyestrone + oxidized [NADPH--hemoprotein reductase] + H2O + H(+)</text>
        <dbReference type="Rhea" id="RHEA:47292"/>
        <dbReference type="Rhea" id="RHEA-COMP:11964"/>
        <dbReference type="Rhea" id="RHEA-COMP:11965"/>
        <dbReference type="ChEBI" id="CHEBI:15377"/>
        <dbReference type="ChEBI" id="CHEBI:15378"/>
        <dbReference type="ChEBI" id="CHEBI:15379"/>
        <dbReference type="ChEBI" id="CHEBI:17263"/>
        <dbReference type="ChEBI" id="CHEBI:57618"/>
        <dbReference type="ChEBI" id="CHEBI:58210"/>
        <dbReference type="ChEBI" id="CHEBI:87602"/>
    </reaction>
    <physiologicalReaction direction="left-to-right" evidence="2">
        <dbReference type="Rhea" id="RHEA:47293"/>
    </physiologicalReaction>
</comment>
<comment type="catalytic activity">
    <reaction evidence="2">
        <text>cholesterol + reduced [NADPH--hemoprotein reductase] + O2 = 25-hydroxycholesterol + oxidized [NADPH--hemoprotein reductase] + H2O + H(+)</text>
        <dbReference type="Rhea" id="RHEA:50256"/>
        <dbReference type="Rhea" id="RHEA-COMP:11964"/>
        <dbReference type="Rhea" id="RHEA-COMP:11965"/>
        <dbReference type="ChEBI" id="CHEBI:15377"/>
        <dbReference type="ChEBI" id="CHEBI:15378"/>
        <dbReference type="ChEBI" id="CHEBI:15379"/>
        <dbReference type="ChEBI" id="CHEBI:16113"/>
        <dbReference type="ChEBI" id="CHEBI:42977"/>
        <dbReference type="ChEBI" id="CHEBI:57618"/>
        <dbReference type="ChEBI" id="CHEBI:58210"/>
    </reaction>
    <physiologicalReaction direction="left-to-right" evidence="2">
        <dbReference type="Rhea" id="RHEA:50257"/>
    </physiologicalReaction>
</comment>
<comment type="catalytic activity">
    <reaction evidence="2">
        <text>all-trans-retinol + reduced [NADPH--hemoprotein reductase] + O2 = all-trans-retinal + oxidized [NADPH--hemoprotein reductase] + 2 H2O + H(+)</text>
        <dbReference type="Rhea" id="RHEA:42092"/>
        <dbReference type="Rhea" id="RHEA-COMP:11964"/>
        <dbReference type="Rhea" id="RHEA-COMP:11965"/>
        <dbReference type="ChEBI" id="CHEBI:15377"/>
        <dbReference type="ChEBI" id="CHEBI:15378"/>
        <dbReference type="ChEBI" id="CHEBI:15379"/>
        <dbReference type="ChEBI" id="CHEBI:17336"/>
        <dbReference type="ChEBI" id="CHEBI:17898"/>
        <dbReference type="ChEBI" id="CHEBI:57618"/>
        <dbReference type="ChEBI" id="CHEBI:58210"/>
    </reaction>
    <physiologicalReaction direction="left-to-right" evidence="2">
        <dbReference type="Rhea" id="RHEA:42093"/>
    </physiologicalReaction>
</comment>
<comment type="catalytic activity">
    <reaction evidence="2">
        <text>all-trans-retinal + reduced [NADPH--hemoprotein reductase] + O2 = all-trans-retinoate + oxidized [NADPH--hemoprotein reductase] + H2O + 2 H(+)</text>
        <dbReference type="Rhea" id="RHEA:42088"/>
        <dbReference type="Rhea" id="RHEA-COMP:11964"/>
        <dbReference type="Rhea" id="RHEA-COMP:11965"/>
        <dbReference type="ChEBI" id="CHEBI:15377"/>
        <dbReference type="ChEBI" id="CHEBI:15378"/>
        <dbReference type="ChEBI" id="CHEBI:15379"/>
        <dbReference type="ChEBI" id="CHEBI:17898"/>
        <dbReference type="ChEBI" id="CHEBI:35291"/>
        <dbReference type="ChEBI" id="CHEBI:57618"/>
        <dbReference type="ChEBI" id="CHEBI:58210"/>
    </reaction>
    <physiologicalReaction direction="left-to-right" evidence="2">
        <dbReference type="Rhea" id="RHEA:42089"/>
    </physiologicalReaction>
</comment>
<comment type="catalytic activity">
    <reaction evidence="2">
        <text>(5Z,8Z,11Z,14Z)-eicosatetraenoate + reduced [NADPH--hemoprotein reductase] + O2 = (14R,15S)-epoxy-(5Z,8Z,11Z)-eicosatrienoate + oxidized [NADPH--hemoprotein reductase] + H2O + H(+)</text>
        <dbReference type="Rhea" id="RHEA:49860"/>
        <dbReference type="Rhea" id="RHEA-COMP:11964"/>
        <dbReference type="Rhea" id="RHEA-COMP:11965"/>
        <dbReference type="ChEBI" id="CHEBI:15377"/>
        <dbReference type="ChEBI" id="CHEBI:15378"/>
        <dbReference type="ChEBI" id="CHEBI:15379"/>
        <dbReference type="ChEBI" id="CHEBI:32395"/>
        <dbReference type="ChEBI" id="CHEBI:57618"/>
        <dbReference type="ChEBI" id="CHEBI:58210"/>
        <dbReference type="ChEBI" id="CHEBI:131965"/>
    </reaction>
    <physiologicalReaction direction="left-to-right" evidence="2">
        <dbReference type="Rhea" id="RHEA:49861"/>
    </physiologicalReaction>
</comment>
<comment type="catalytic activity">
    <reaction evidence="2">
        <text>(5Z,8Z,11Z,14Z)-eicosatetraenoate + reduced [NADPH--hemoprotein reductase] + O2 = (14S,15R)-epoxy-(5Z,8Z,11Z)-eicosatrienoate + oxidized [NADPH--hemoprotein reductase] + H2O + H(+)</text>
        <dbReference type="Rhea" id="RHEA:49856"/>
        <dbReference type="Rhea" id="RHEA-COMP:11964"/>
        <dbReference type="Rhea" id="RHEA-COMP:11965"/>
        <dbReference type="ChEBI" id="CHEBI:15377"/>
        <dbReference type="ChEBI" id="CHEBI:15378"/>
        <dbReference type="ChEBI" id="CHEBI:15379"/>
        <dbReference type="ChEBI" id="CHEBI:32395"/>
        <dbReference type="ChEBI" id="CHEBI:57618"/>
        <dbReference type="ChEBI" id="CHEBI:58210"/>
        <dbReference type="ChEBI" id="CHEBI:131964"/>
    </reaction>
    <physiologicalReaction direction="left-to-right" evidence="2">
        <dbReference type="Rhea" id="RHEA:49857"/>
    </physiologicalReaction>
</comment>
<comment type="catalytic activity">
    <reaction evidence="2">
        <text>(5Z,8Z,11Z,14Z,17Z)-eicosapentaenoate + reduced [NADPH--hemoprotein reductase] + O2 = (17R,18S)-epoxy-(5Z,8Z,11Z,14Z)-eicosatetraenoate + oxidized [NADPH--hemoprotein reductase] + H2O + H(+)</text>
        <dbReference type="Rhea" id="RHEA:39779"/>
        <dbReference type="Rhea" id="RHEA-COMP:11964"/>
        <dbReference type="Rhea" id="RHEA-COMP:11965"/>
        <dbReference type="ChEBI" id="CHEBI:15377"/>
        <dbReference type="ChEBI" id="CHEBI:15378"/>
        <dbReference type="ChEBI" id="CHEBI:15379"/>
        <dbReference type="ChEBI" id="CHEBI:57618"/>
        <dbReference type="ChEBI" id="CHEBI:58210"/>
        <dbReference type="ChEBI" id="CHEBI:58562"/>
        <dbReference type="ChEBI" id="CHEBI:76634"/>
    </reaction>
    <physiologicalReaction direction="left-to-right" evidence="2">
        <dbReference type="Rhea" id="RHEA:39780"/>
    </physiologicalReaction>
</comment>
<comment type="catalytic activity">
    <reaction evidence="2">
        <text>(4Z,7Z,10Z,13Z,16Z,19Z)-docosahexaenoate + reduced [NADPH--hemoprotein reductase] + O2 = (19R,20S)-epoxy-(4Z,7Z,10Z,13Z,16Z)-docosapentaenoate + oxidized [NADPH--hemoprotein reductase] + H2O + H(+)</text>
        <dbReference type="Rhea" id="RHEA:52120"/>
        <dbReference type="Rhea" id="RHEA-COMP:11964"/>
        <dbReference type="Rhea" id="RHEA-COMP:11965"/>
        <dbReference type="ChEBI" id="CHEBI:15377"/>
        <dbReference type="ChEBI" id="CHEBI:15378"/>
        <dbReference type="ChEBI" id="CHEBI:15379"/>
        <dbReference type="ChEBI" id="CHEBI:57618"/>
        <dbReference type="ChEBI" id="CHEBI:58210"/>
        <dbReference type="ChEBI" id="CHEBI:77016"/>
        <dbReference type="ChEBI" id="CHEBI:136410"/>
    </reaction>
    <physiologicalReaction direction="left-to-right" evidence="2">
        <dbReference type="Rhea" id="RHEA:52121"/>
    </physiologicalReaction>
</comment>
<comment type="catalytic activity">
    <reaction evidence="2">
        <text>(5S)-hydroperoxy-(6E,8Z,11Z,14Z)-eicosatetraenoate = 5-oxo-(6E,8Z,11Z,14Z)-eicosatetraenoate + H2O</text>
        <dbReference type="Rhea" id="RHEA:48632"/>
        <dbReference type="ChEBI" id="CHEBI:15377"/>
        <dbReference type="ChEBI" id="CHEBI:57450"/>
        <dbReference type="ChEBI" id="CHEBI:65342"/>
    </reaction>
    <physiologicalReaction direction="left-to-right" evidence="2">
        <dbReference type="Rhea" id="RHEA:48633"/>
    </physiologicalReaction>
</comment>
<comment type="catalytic activity">
    <reaction evidence="2">
        <text>(12S)-hydroperoxy-(5Z,8Z,10E,14Z)-eicosatetraenoate = 12-oxo-(5Z,8Z,10E,14Z)-eicosatetraenoate + H2O</text>
        <dbReference type="Rhea" id="RHEA:37947"/>
        <dbReference type="ChEBI" id="CHEBI:15377"/>
        <dbReference type="ChEBI" id="CHEBI:57444"/>
        <dbReference type="ChEBI" id="CHEBI:75231"/>
        <dbReference type="EC" id="4.2.1.152"/>
    </reaction>
    <physiologicalReaction direction="left-to-right" evidence="2">
        <dbReference type="Rhea" id="RHEA:37948"/>
    </physiologicalReaction>
</comment>
<comment type="catalytic activity">
    <reaction evidence="2">
        <text>(15S)-hydroperoxy-(5Z,8Z,11Z,13E)-eicosatetraenoate = 15-oxo-(5Z,8Z,11Z,13E)-eicosatetraenoate + H2O</text>
        <dbReference type="Rhea" id="RHEA:48636"/>
        <dbReference type="ChEBI" id="CHEBI:15377"/>
        <dbReference type="ChEBI" id="CHEBI:57410"/>
        <dbReference type="ChEBI" id="CHEBI:57446"/>
    </reaction>
    <physiologicalReaction direction="left-to-right" evidence="2">
        <dbReference type="Rhea" id="RHEA:48637"/>
    </physiologicalReaction>
</comment>
<comment type="catalytic activity">
    <reaction evidence="2">
        <text>(13S)-hydroperoxy-(9Z,11E)-octadecadienoate = 13-oxo-(9Z,11E)-octadecadienoate + H2O</text>
        <dbReference type="Rhea" id="RHEA:48716"/>
        <dbReference type="ChEBI" id="CHEBI:15377"/>
        <dbReference type="ChEBI" id="CHEBI:57466"/>
        <dbReference type="ChEBI" id="CHEBI:90781"/>
    </reaction>
    <physiologicalReaction direction="left-to-right" evidence="2">
        <dbReference type="Rhea" id="RHEA:48717"/>
    </physiologicalReaction>
</comment>
<comment type="catalytic activity">
    <reaction evidence="2">
        <text>(5Z,8Z,11Z,14Z)-eicosatetraenoate + reduced [NADPH--hemoprotein reductase] + O2 = 13-hydroxy-(5Z,8Z,11Z,14Z)-eicosatetraenoate + oxidized [NADPH--hemoprotein reductase] + H2O + H(+)</text>
        <dbReference type="Rhea" id="RHEA:52292"/>
        <dbReference type="Rhea" id="RHEA-COMP:11964"/>
        <dbReference type="Rhea" id="RHEA-COMP:11965"/>
        <dbReference type="ChEBI" id="CHEBI:15377"/>
        <dbReference type="ChEBI" id="CHEBI:15378"/>
        <dbReference type="ChEBI" id="CHEBI:15379"/>
        <dbReference type="ChEBI" id="CHEBI:32395"/>
        <dbReference type="ChEBI" id="CHEBI:57618"/>
        <dbReference type="ChEBI" id="CHEBI:58210"/>
        <dbReference type="ChEBI" id="CHEBI:136524"/>
    </reaction>
    <physiologicalReaction direction="left-to-right" evidence="2">
        <dbReference type="Rhea" id="RHEA:52293"/>
    </physiologicalReaction>
</comment>
<comment type="catalytic activity">
    <reaction evidence="2">
        <text>(5Z,8Z,11Z,14Z)-eicosatetraenoate + reduced [NADPH--hemoprotein reductase] + O2 = 19-hydroxy-(5Z,8Z,11Z,14Z)-eicosatetraenoate + oxidized [NADPH--hemoprotein reductase] + H2O + H(+)</text>
        <dbReference type="Rhea" id="RHEA:39759"/>
        <dbReference type="Rhea" id="RHEA-COMP:11964"/>
        <dbReference type="Rhea" id="RHEA-COMP:11965"/>
        <dbReference type="ChEBI" id="CHEBI:15377"/>
        <dbReference type="ChEBI" id="CHEBI:15378"/>
        <dbReference type="ChEBI" id="CHEBI:15379"/>
        <dbReference type="ChEBI" id="CHEBI:32395"/>
        <dbReference type="ChEBI" id="CHEBI:57618"/>
        <dbReference type="ChEBI" id="CHEBI:58210"/>
        <dbReference type="ChEBI" id="CHEBI:76627"/>
    </reaction>
    <physiologicalReaction direction="left-to-right" evidence="2">
        <dbReference type="Rhea" id="RHEA:39760"/>
    </physiologicalReaction>
</comment>
<comment type="catalytic activity">
    <reaction evidence="2">
        <text>(9Z,12Z)-octadecadienoate + reduced [NADPH--hemoprotein reductase] + O2 = 11-hydroxy-(9Z,12Z)-octadecadienoate + oxidized [NADPH--hemoprotein reductase] + H2O + H(+)</text>
        <dbReference type="Rhea" id="RHEA:52284"/>
        <dbReference type="Rhea" id="RHEA-COMP:11964"/>
        <dbReference type="Rhea" id="RHEA-COMP:11965"/>
        <dbReference type="ChEBI" id="CHEBI:15377"/>
        <dbReference type="ChEBI" id="CHEBI:15378"/>
        <dbReference type="ChEBI" id="CHEBI:15379"/>
        <dbReference type="ChEBI" id="CHEBI:30245"/>
        <dbReference type="ChEBI" id="CHEBI:57618"/>
        <dbReference type="ChEBI" id="CHEBI:58210"/>
        <dbReference type="ChEBI" id="CHEBI:136522"/>
    </reaction>
    <physiologicalReaction direction="left-to-right" evidence="2">
        <dbReference type="Rhea" id="RHEA:52285"/>
    </physiologicalReaction>
</comment>
<comment type="cofactor">
    <cofactor evidence="1">
        <name>heme</name>
        <dbReference type="ChEBI" id="CHEBI:30413"/>
    </cofactor>
</comment>
<comment type="pathway">
    <text evidence="2">Cofactor metabolism; retinol metabolism.</text>
</comment>
<comment type="pathway">
    <text evidence="2">Steroid metabolism; cholesterol metabolism.</text>
</comment>
<comment type="pathway">
    <text evidence="2">Lipid metabolism; arachidonate metabolism.</text>
</comment>
<comment type="subunit">
    <text evidence="2">Interacts with PGRMC1; the interaction requires PGRMC1 homodimerization.</text>
</comment>
<comment type="subcellular location">
    <subcellularLocation>
        <location evidence="2">Endoplasmic reticulum membrane</location>
        <topology evidence="2">Peripheral membrane protein</topology>
    </subcellularLocation>
    <subcellularLocation>
        <location evidence="2">Microsome membrane</location>
        <topology evidence="2">Peripheral membrane protein</topology>
    </subcellularLocation>
</comment>
<comment type="similarity">
    <text evidence="3">Belongs to the cytochrome P450 family.</text>
</comment>
<feature type="chain" id="PRO_0000232909" description="Cytochrome P450 1A2">
    <location>
        <begin position="1"/>
        <end position="516"/>
    </location>
</feature>
<feature type="binding site" evidence="1">
    <location>
        <position position="226"/>
    </location>
    <ligand>
        <name>substrate</name>
    </ligand>
</feature>
<feature type="binding site" description="axial binding residue" evidence="1">
    <location>
        <position position="458"/>
    </location>
    <ligand>
        <name>heme</name>
        <dbReference type="ChEBI" id="CHEBI:30413"/>
    </ligand>
    <ligandPart>
        <name>Fe</name>
        <dbReference type="ChEBI" id="CHEBI:18248"/>
    </ligandPart>
</feature>
<feature type="glycosylation site" description="O-linked (GlcNAc) serine" evidence="1">
    <location>
        <position position="69"/>
    </location>
</feature>
<dbReference type="EC" id="1.14.14.1" evidence="2"/>
<dbReference type="EC" id="4.2.1.152" evidence="2"/>
<dbReference type="EMBL" id="CR858587">
    <property type="protein sequence ID" value="CAH90809.1"/>
    <property type="molecule type" value="mRNA"/>
</dbReference>
<dbReference type="RefSeq" id="NP_001125460.1">
    <property type="nucleotide sequence ID" value="NM_001131988.1"/>
</dbReference>
<dbReference type="SMR" id="Q5RBQ1"/>
<dbReference type="FunCoup" id="Q5RBQ1">
    <property type="interactions" value="229"/>
</dbReference>
<dbReference type="STRING" id="9601.ENSPPYP00000007537"/>
<dbReference type="GlyCosmos" id="Q5RBQ1">
    <property type="glycosylation" value="1 site, No reported glycans"/>
</dbReference>
<dbReference type="GeneID" id="100172368"/>
<dbReference type="KEGG" id="pon:100172368"/>
<dbReference type="CTD" id="1544"/>
<dbReference type="eggNOG" id="KOG0156">
    <property type="taxonomic scope" value="Eukaryota"/>
</dbReference>
<dbReference type="InParanoid" id="Q5RBQ1"/>
<dbReference type="OrthoDB" id="1055148at2759"/>
<dbReference type="UniPathway" id="UPA00296"/>
<dbReference type="UniPathway" id="UPA00383"/>
<dbReference type="UniPathway" id="UPA00912"/>
<dbReference type="Proteomes" id="UP000001595">
    <property type="component" value="Unplaced"/>
</dbReference>
<dbReference type="GO" id="GO:0005789">
    <property type="term" value="C:endoplasmic reticulum membrane"/>
    <property type="evidence" value="ECO:0007669"/>
    <property type="project" value="UniProtKB-SubCell"/>
</dbReference>
<dbReference type="GO" id="GO:0101020">
    <property type="term" value="F:estrogen 16-alpha-hydroxylase activity"/>
    <property type="evidence" value="ECO:0000250"/>
    <property type="project" value="UniProtKB"/>
</dbReference>
<dbReference type="GO" id="GO:0101021">
    <property type="term" value="F:estrogen 2-hydroxylase activity"/>
    <property type="evidence" value="ECO:0000250"/>
    <property type="project" value="UniProtKB"/>
</dbReference>
<dbReference type="GO" id="GO:0020037">
    <property type="term" value="F:heme binding"/>
    <property type="evidence" value="ECO:0000250"/>
    <property type="project" value="UniProtKB"/>
</dbReference>
<dbReference type="GO" id="GO:0106256">
    <property type="term" value="F:hydroperoxy icosatetraenoate dehydratase activity"/>
    <property type="evidence" value="ECO:0007669"/>
    <property type="project" value="UniProtKB-EC"/>
</dbReference>
<dbReference type="GO" id="GO:0005506">
    <property type="term" value="F:iron ion binding"/>
    <property type="evidence" value="ECO:0007669"/>
    <property type="project" value="InterPro"/>
</dbReference>
<dbReference type="GO" id="GO:0004508">
    <property type="term" value="F:steroid 17-alpha-monooxygenase activity"/>
    <property type="evidence" value="ECO:0007669"/>
    <property type="project" value="TreeGrafter"/>
</dbReference>
<dbReference type="GO" id="GO:0019369">
    <property type="term" value="P:arachidonate metabolic process"/>
    <property type="evidence" value="ECO:0007669"/>
    <property type="project" value="UniProtKB-UniPathway"/>
</dbReference>
<dbReference type="GO" id="GO:0008203">
    <property type="term" value="P:cholesterol metabolic process"/>
    <property type="evidence" value="ECO:0007669"/>
    <property type="project" value="UniProtKB-UniPathway"/>
</dbReference>
<dbReference type="GO" id="GO:0008210">
    <property type="term" value="P:estrogen metabolic process"/>
    <property type="evidence" value="ECO:0000250"/>
    <property type="project" value="UniProtKB"/>
</dbReference>
<dbReference type="GO" id="GO:0042446">
    <property type="term" value="P:hormone biosynthetic process"/>
    <property type="evidence" value="ECO:0007669"/>
    <property type="project" value="TreeGrafter"/>
</dbReference>
<dbReference type="GO" id="GO:0042448">
    <property type="term" value="P:progesterone metabolic process"/>
    <property type="evidence" value="ECO:0007669"/>
    <property type="project" value="TreeGrafter"/>
</dbReference>
<dbReference type="GO" id="GO:0042572">
    <property type="term" value="P:retinol metabolic process"/>
    <property type="evidence" value="ECO:0000250"/>
    <property type="project" value="UniProtKB"/>
</dbReference>
<dbReference type="CDD" id="cd20676">
    <property type="entry name" value="CYP1A"/>
    <property type="match status" value="1"/>
</dbReference>
<dbReference type="FunFam" id="1.10.630.10:FF:000002">
    <property type="entry name" value="Cytochrome P450 1A1"/>
    <property type="match status" value="1"/>
</dbReference>
<dbReference type="Gene3D" id="1.10.630.10">
    <property type="entry name" value="Cytochrome P450"/>
    <property type="match status" value="1"/>
</dbReference>
<dbReference type="InterPro" id="IPR001128">
    <property type="entry name" value="Cyt_P450"/>
</dbReference>
<dbReference type="InterPro" id="IPR017972">
    <property type="entry name" value="Cyt_P450_CS"/>
</dbReference>
<dbReference type="InterPro" id="IPR002401">
    <property type="entry name" value="Cyt_P450_E_grp-I"/>
</dbReference>
<dbReference type="InterPro" id="IPR008066">
    <property type="entry name" value="Cyt_P450_E_grp-I_CYP1"/>
</dbReference>
<dbReference type="InterPro" id="IPR036396">
    <property type="entry name" value="Cyt_P450_sf"/>
</dbReference>
<dbReference type="PANTHER" id="PTHR24289:SF21">
    <property type="entry name" value="CYTOCHROME P450 1A"/>
    <property type="match status" value="1"/>
</dbReference>
<dbReference type="PANTHER" id="PTHR24289">
    <property type="entry name" value="STEROID 17-ALPHA-HYDROXYLASE/17,20 LYASE"/>
    <property type="match status" value="1"/>
</dbReference>
<dbReference type="Pfam" id="PF00067">
    <property type="entry name" value="p450"/>
    <property type="match status" value="1"/>
</dbReference>
<dbReference type="PRINTS" id="PR00463">
    <property type="entry name" value="EP450I"/>
</dbReference>
<dbReference type="PRINTS" id="PR01683">
    <property type="entry name" value="EP450ICYP1A"/>
</dbReference>
<dbReference type="PRINTS" id="PR00385">
    <property type="entry name" value="P450"/>
</dbReference>
<dbReference type="SUPFAM" id="SSF48264">
    <property type="entry name" value="Cytochrome P450"/>
    <property type="match status" value="1"/>
</dbReference>
<dbReference type="PROSITE" id="PS00086">
    <property type="entry name" value="CYTOCHROME_P450"/>
    <property type="match status" value="1"/>
</dbReference>
<organism>
    <name type="scientific">Pongo abelii</name>
    <name type="common">Sumatran orangutan</name>
    <name type="synonym">Pongo pygmaeus abelii</name>
    <dbReference type="NCBI Taxonomy" id="9601"/>
    <lineage>
        <taxon>Eukaryota</taxon>
        <taxon>Metazoa</taxon>
        <taxon>Chordata</taxon>
        <taxon>Craniata</taxon>
        <taxon>Vertebrata</taxon>
        <taxon>Euteleostomi</taxon>
        <taxon>Mammalia</taxon>
        <taxon>Eutheria</taxon>
        <taxon>Euarchontoglires</taxon>
        <taxon>Primates</taxon>
        <taxon>Haplorrhini</taxon>
        <taxon>Catarrhini</taxon>
        <taxon>Hominidae</taxon>
        <taxon>Pongo</taxon>
    </lineage>
</organism>
<evidence type="ECO:0000250" key="1"/>
<evidence type="ECO:0000250" key="2">
    <source>
        <dbReference type="UniProtKB" id="P05177"/>
    </source>
</evidence>
<evidence type="ECO:0000305" key="3"/>
<gene>
    <name type="primary">CYP1A2</name>
</gene>
<accession>Q5RBQ1</accession>
<proteinExistence type="evidence at transcript level"/>
<sequence>MALSQSVPFSATELLLASAIFCLVFWVLKGLRPRVPKGLKSPPEPWGWPLLGHVLTLRKNPHLALSRMSQRYGDVLQIRIGSTPVLVLSGLDTIRQALVRQGDDFKGRPDLYSSTLITDGQSLTFSPDSGPVWAARRHLAQNALNTFSIASDPASSYSCYLEEHVSKEAEALISRLQELMAGPGHFDPYNQVVVSVVNVIGAMCFGQHFPESSDEMLSLVKNTHEFVETASSGNPVDFFPILRYLPNPALQRFKAFNQRFLRFLRKTVQEHYQDFDKNSVQDIMGALFKYSKKGPRASGNLIPQEKIVNLVNDIFGAGFDTVTTAISWSLMYLVTKPEIQRKIQKELDTMIGRGRRPRLSDRPQLPYLKAFILETFRHSSFLPFTIPHSTTRDTTLNGFYIPKECCVFVNQWQVNHDPELWEDPSEFWPERFLTTDGTAINKPLSEKVMLFGMGKRRCIGEVLANWEVFLFLAILLQQLEFSVPPGVKVDLTPIYGLTMKHARCEHVQARLRFSIK</sequence>
<keyword id="KW-0256">Endoplasmic reticulum</keyword>
<keyword id="KW-0276">Fatty acid metabolism</keyword>
<keyword id="KW-0325">Glycoprotein</keyword>
<keyword id="KW-0349">Heme</keyword>
<keyword id="KW-0408">Iron</keyword>
<keyword id="KW-0443">Lipid metabolism</keyword>
<keyword id="KW-0456">Lyase</keyword>
<keyword id="KW-0472">Membrane</keyword>
<keyword id="KW-0479">Metal-binding</keyword>
<keyword id="KW-0492">Microsome</keyword>
<keyword id="KW-0503">Monooxygenase</keyword>
<keyword id="KW-0560">Oxidoreductase</keyword>
<keyword id="KW-1185">Reference proteome</keyword>
<keyword id="KW-0753">Steroid metabolism</keyword>
<keyword id="KW-1207">Sterol metabolism</keyword>